<comment type="similarity">
    <text evidence="1">Belongs to the UPF0303 family.</text>
</comment>
<proteinExistence type="inferred from homology"/>
<protein>
    <recommendedName>
        <fullName evidence="1">UPF0303 protein Bcep1808_1522</fullName>
    </recommendedName>
</protein>
<gene>
    <name type="ordered locus">Bcep1808_1522</name>
</gene>
<organism>
    <name type="scientific">Burkholderia vietnamiensis (strain G4 / LMG 22486)</name>
    <name type="common">Burkholderia cepacia (strain R1808)</name>
    <dbReference type="NCBI Taxonomy" id="269482"/>
    <lineage>
        <taxon>Bacteria</taxon>
        <taxon>Pseudomonadati</taxon>
        <taxon>Pseudomonadota</taxon>
        <taxon>Betaproteobacteria</taxon>
        <taxon>Burkholderiales</taxon>
        <taxon>Burkholderiaceae</taxon>
        <taxon>Burkholderia</taxon>
        <taxon>Burkholderia cepacia complex</taxon>
    </lineage>
</organism>
<reference key="1">
    <citation type="submission" date="2007-03" db="EMBL/GenBank/DDBJ databases">
        <title>Complete sequence of chromosome 1 of Burkholderia vietnamiensis G4.</title>
        <authorList>
            <consortium name="US DOE Joint Genome Institute"/>
            <person name="Copeland A."/>
            <person name="Lucas S."/>
            <person name="Lapidus A."/>
            <person name="Barry K."/>
            <person name="Detter J.C."/>
            <person name="Glavina del Rio T."/>
            <person name="Hammon N."/>
            <person name="Israni S."/>
            <person name="Dalin E."/>
            <person name="Tice H."/>
            <person name="Pitluck S."/>
            <person name="Chain P."/>
            <person name="Malfatti S."/>
            <person name="Shin M."/>
            <person name="Vergez L."/>
            <person name="Schmutz J."/>
            <person name="Larimer F."/>
            <person name="Land M."/>
            <person name="Hauser L."/>
            <person name="Kyrpides N."/>
            <person name="Tiedje J."/>
            <person name="Richardson P."/>
        </authorList>
    </citation>
    <scope>NUCLEOTIDE SEQUENCE [LARGE SCALE GENOMIC DNA]</scope>
    <source>
        <strain>G4 / LMG 22486</strain>
    </source>
</reference>
<evidence type="ECO:0000255" key="1">
    <source>
        <dbReference type="HAMAP-Rule" id="MF_00761"/>
    </source>
</evidence>
<feature type="chain" id="PRO_1000046746" description="UPF0303 protein Bcep1808_1522">
    <location>
        <begin position="1"/>
        <end position="165"/>
    </location>
</feature>
<name>Y1522_BURVG</name>
<accession>A4JE26</accession>
<sequence>MDIAHDLQSIGAQEQALVFPQFDPARAWALGNRMHALATARGHAIAIDIATFGQPLFFAALAGATPDNADWVRRKRNVVAHFRRSSYAIGLRMQQAGATLADKHGLPISEYSPHGGSFPLTVAGAGVIGSITASGLPQRADHEFVVEALCAELGHDYAVLALERS</sequence>
<dbReference type="EMBL" id="CP000614">
    <property type="protein sequence ID" value="ABO54529.1"/>
    <property type="molecule type" value="Genomic_DNA"/>
</dbReference>
<dbReference type="SMR" id="A4JE26"/>
<dbReference type="KEGG" id="bvi:Bcep1808_1522"/>
<dbReference type="eggNOG" id="COG4702">
    <property type="taxonomic scope" value="Bacteria"/>
</dbReference>
<dbReference type="HOGENOM" id="CLU_101036_2_2_4"/>
<dbReference type="Proteomes" id="UP000002287">
    <property type="component" value="Chromosome 1"/>
</dbReference>
<dbReference type="Gene3D" id="3.30.450.150">
    <property type="entry name" value="Haem-degrading domain"/>
    <property type="match status" value="1"/>
</dbReference>
<dbReference type="HAMAP" id="MF_00761">
    <property type="entry name" value="UPF0303"/>
    <property type="match status" value="1"/>
</dbReference>
<dbReference type="InterPro" id="IPR005624">
    <property type="entry name" value="PduO/GlcC-like"/>
</dbReference>
<dbReference type="InterPro" id="IPR038084">
    <property type="entry name" value="PduO/GlcC-like_sf"/>
</dbReference>
<dbReference type="InterPro" id="IPR010371">
    <property type="entry name" value="YBR137W-like"/>
</dbReference>
<dbReference type="NCBIfam" id="NF002695">
    <property type="entry name" value="PRK02487.1-4"/>
    <property type="match status" value="1"/>
</dbReference>
<dbReference type="NCBIfam" id="NF002696">
    <property type="entry name" value="PRK02487.1-5"/>
    <property type="match status" value="1"/>
</dbReference>
<dbReference type="PANTHER" id="PTHR28255">
    <property type="match status" value="1"/>
</dbReference>
<dbReference type="PANTHER" id="PTHR28255:SF1">
    <property type="entry name" value="UPF0303 PROTEIN YBR137W"/>
    <property type="match status" value="1"/>
</dbReference>
<dbReference type="Pfam" id="PF03928">
    <property type="entry name" value="HbpS-like"/>
    <property type="match status" value="1"/>
</dbReference>
<dbReference type="PIRSF" id="PIRSF008757">
    <property type="entry name" value="UCP008757"/>
    <property type="match status" value="1"/>
</dbReference>
<dbReference type="SUPFAM" id="SSF143744">
    <property type="entry name" value="GlcG-like"/>
    <property type="match status" value="1"/>
</dbReference>